<comment type="function">
    <text evidence="1">Specifically methylates the pseudouridine at position 1915 (m3Psi1915) in 23S rRNA.</text>
</comment>
<comment type="catalytic activity">
    <reaction evidence="1">
        <text>pseudouridine(1915) in 23S rRNA + S-adenosyl-L-methionine = N(3)-methylpseudouridine(1915) in 23S rRNA + S-adenosyl-L-homocysteine + H(+)</text>
        <dbReference type="Rhea" id="RHEA:42752"/>
        <dbReference type="Rhea" id="RHEA-COMP:10221"/>
        <dbReference type="Rhea" id="RHEA-COMP:10222"/>
        <dbReference type="ChEBI" id="CHEBI:15378"/>
        <dbReference type="ChEBI" id="CHEBI:57856"/>
        <dbReference type="ChEBI" id="CHEBI:59789"/>
        <dbReference type="ChEBI" id="CHEBI:65314"/>
        <dbReference type="ChEBI" id="CHEBI:74486"/>
        <dbReference type="EC" id="2.1.1.177"/>
    </reaction>
</comment>
<comment type="subunit">
    <text evidence="1">Homodimer.</text>
</comment>
<comment type="subcellular location">
    <subcellularLocation>
        <location evidence="1">Cytoplasm</location>
    </subcellularLocation>
</comment>
<comment type="similarity">
    <text evidence="1">Belongs to the RNA methyltransferase RlmH family.</text>
</comment>
<comment type="sequence caution" evidence="2">
    <conflict type="erroneous initiation">
        <sequence resource="EMBL-CDS" id="AAT62668"/>
    </conflict>
</comment>
<protein>
    <recommendedName>
        <fullName evidence="1">Ribosomal RNA large subunit methyltransferase H</fullName>
        <ecNumber evidence="1">2.1.1.177</ecNumber>
    </recommendedName>
    <alternativeName>
        <fullName evidence="1">23S rRNA (pseudouridine1915-N3)-methyltransferase</fullName>
    </alternativeName>
    <alternativeName>
        <fullName evidence="1">23S rRNA m3Psi1915 methyltransferase</fullName>
    </alternativeName>
    <alternativeName>
        <fullName evidence="1">rRNA (pseudouridine-N3-)-methyltransferase RlmH</fullName>
    </alternativeName>
</protein>
<proteinExistence type="inferred from homology"/>
<name>RLMH_BACHK</name>
<organism>
    <name type="scientific">Bacillus thuringiensis subsp. konkukian (strain 97-27)</name>
    <dbReference type="NCBI Taxonomy" id="281309"/>
    <lineage>
        <taxon>Bacteria</taxon>
        <taxon>Bacillati</taxon>
        <taxon>Bacillota</taxon>
        <taxon>Bacilli</taxon>
        <taxon>Bacillales</taxon>
        <taxon>Bacillaceae</taxon>
        <taxon>Bacillus</taxon>
        <taxon>Bacillus cereus group</taxon>
    </lineage>
</organism>
<feature type="chain" id="PRO_0000198087" description="Ribosomal RNA large subunit methyltransferase H">
    <location>
        <begin position="1"/>
        <end position="159"/>
    </location>
</feature>
<feature type="binding site" evidence="1">
    <location>
        <position position="76"/>
    </location>
    <ligand>
        <name>S-adenosyl-L-methionine</name>
        <dbReference type="ChEBI" id="CHEBI:59789"/>
    </ligand>
</feature>
<feature type="binding site" evidence="1">
    <location>
        <position position="108"/>
    </location>
    <ligand>
        <name>S-adenosyl-L-methionine</name>
        <dbReference type="ChEBI" id="CHEBI:59789"/>
    </ligand>
</feature>
<feature type="binding site" evidence="1">
    <location>
        <begin position="127"/>
        <end position="132"/>
    </location>
    <ligand>
        <name>S-adenosyl-L-methionine</name>
        <dbReference type="ChEBI" id="CHEBI:59789"/>
    </ligand>
</feature>
<accession>Q6HAH7</accession>
<dbReference type="EC" id="2.1.1.177" evidence="1"/>
<dbReference type="EMBL" id="AE017355">
    <property type="protein sequence ID" value="AAT62668.1"/>
    <property type="status" value="ALT_INIT"/>
    <property type="molecule type" value="Genomic_DNA"/>
</dbReference>
<dbReference type="RefSeq" id="WP_001027004.1">
    <property type="nucleotide sequence ID" value="NC_005957.1"/>
</dbReference>
<dbReference type="RefSeq" id="YP_039449.2">
    <property type="nucleotide sequence ID" value="NC_005957.1"/>
</dbReference>
<dbReference type="SMR" id="Q6HAH7"/>
<dbReference type="KEGG" id="btk:BT9727_5140"/>
<dbReference type="PATRIC" id="fig|281309.8.peg.5465"/>
<dbReference type="HOGENOM" id="CLU_100552_0_0_9"/>
<dbReference type="Proteomes" id="UP000001301">
    <property type="component" value="Chromosome"/>
</dbReference>
<dbReference type="GO" id="GO:0005737">
    <property type="term" value="C:cytoplasm"/>
    <property type="evidence" value="ECO:0007669"/>
    <property type="project" value="UniProtKB-SubCell"/>
</dbReference>
<dbReference type="GO" id="GO:0070038">
    <property type="term" value="F:rRNA (pseudouridine-N3-)-methyltransferase activity"/>
    <property type="evidence" value="ECO:0007669"/>
    <property type="project" value="UniProtKB-UniRule"/>
</dbReference>
<dbReference type="CDD" id="cd18081">
    <property type="entry name" value="RlmH-like"/>
    <property type="match status" value="1"/>
</dbReference>
<dbReference type="Gene3D" id="3.40.1280.10">
    <property type="match status" value="1"/>
</dbReference>
<dbReference type="HAMAP" id="MF_00658">
    <property type="entry name" value="23SrRNA_methyltr_H"/>
    <property type="match status" value="1"/>
</dbReference>
<dbReference type="InterPro" id="IPR029028">
    <property type="entry name" value="Alpha/beta_knot_MTases"/>
</dbReference>
<dbReference type="InterPro" id="IPR003742">
    <property type="entry name" value="RlmH-like"/>
</dbReference>
<dbReference type="InterPro" id="IPR029026">
    <property type="entry name" value="tRNA_m1G_MTases_N"/>
</dbReference>
<dbReference type="NCBIfam" id="NF000985">
    <property type="entry name" value="PRK00103.1-3"/>
    <property type="match status" value="1"/>
</dbReference>
<dbReference type="NCBIfam" id="TIGR00246">
    <property type="entry name" value="tRNA_RlmH_YbeA"/>
    <property type="match status" value="1"/>
</dbReference>
<dbReference type="PANTHER" id="PTHR33603">
    <property type="entry name" value="METHYLTRANSFERASE"/>
    <property type="match status" value="1"/>
</dbReference>
<dbReference type="PANTHER" id="PTHR33603:SF1">
    <property type="entry name" value="RIBOSOMAL RNA LARGE SUBUNIT METHYLTRANSFERASE H"/>
    <property type="match status" value="1"/>
</dbReference>
<dbReference type="Pfam" id="PF02590">
    <property type="entry name" value="SPOUT_MTase"/>
    <property type="match status" value="1"/>
</dbReference>
<dbReference type="PIRSF" id="PIRSF004505">
    <property type="entry name" value="MT_bac"/>
    <property type="match status" value="1"/>
</dbReference>
<dbReference type="SUPFAM" id="SSF75217">
    <property type="entry name" value="alpha/beta knot"/>
    <property type="match status" value="1"/>
</dbReference>
<evidence type="ECO:0000255" key="1">
    <source>
        <dbReference type="HAMAP-Rule" id="MF_00658"/>
    </source>
</evidence>
<evidence type="ECO:0000305" key="2"/>
<sequence length="159" mass="17943">MNISIISIGKLKEKYLKQGIAEYLKRLSAYAKVEVIELPDEKAPENLSEAEMLIVKEKEGIRILDKISDDTHVIALAIEGKQKSSEEFAVSLDRLATYGKSKVAFVIGGSLGLSSEVMKRSNESLSFSKMTLPHQLMRLVLLEQVYRSFRINRGEPYHK</sequence>
<gene>
    <name evidence="1" type="primary">rlmH</name>
    <name type="ordered locus">BT9727_5140</name>
</gene>
<keyword id="KW-0963">Cytoplasm</keyword>
<keyword id="KW-0489">Methyltransferase</keyword>
<keyword id="KW-0698">rRNA processing</keyword>
<keyword id="KW-0949">S-adenosyl-L-methionine</keyword>
<keyword id="KW-0808">Transferase</keyword>
<reference key="1">
    <citation type="journal article" date="2006" name="J. Bacteriol.">
        <title>Pathogenomic sequence analysis of Bacillus cereus and Bacillus thuringiensis isolates closely related to Bacillus anthracis.</title>
        <authorList>
            <person name="Han C.S."/>
            <person name="Xie G."/>
            <person name="Challacombe J.F."/>
            <person name="Altherr M.R."/>
            <person name="Bhotika S.S."/>
            <person name="Bruce D."/>
            <person name="Campbell C.S."/>
            <person name="Campbell M.L."/>
            <person name="Chen J."/>
            <person name="Chertkov O."/>
            <person name="Cleland C."/>
            <person name="Dimitrijevic M."/>
            <person name="Doggett N.A."/>
            <person name="Fawcett J.J."/>
            <person name="Glavina T."/>
            <person name="Goodwin L.A."/>
            <person name="Hill K.K."/>
            <person name="Hitchcock P."/>
            <person name="Jackson P.J."/>
            <person name="Keim P."/>
            <person name="Kewalramani A.R."/>
            <person name="Longmire J."/>
            <person name="Lucas S."/>
            <person name="Malfatti S."/>
            <person name="McMurry K."/>
            <person name="Meincke L.J."/>
            <person name="Misra M."/>
            <person name="Moseman B.L."/>
            <person name="Mundt M."/>
            <person name="Munk A.C."/>
            <person name="Okinaka R.T."/>
            <person name="Parson-Quintana B."/>
            <person name="Reilly L.P."/>
            <person name="Richardson P."/>
            <person name="Robinson D.L."/>
            <person name="Rubin E."/>
            <person name="Saunders E."/>
            <person name="Tapia R."/>
            <person name="Tesmer J.G."/>
            <person name="Thayer N."/>
            <person name="Thompson L.S."/>
            <person name="Tice H."/>
            <person name="Ticknor L.O."/>
            <person name="Wills P.L."/>
            <person name="Brettin T.S."/>
            <person name="Gilna P."/>
        </authorList>
    </citation>
    <scope>NUCLEOTIDE SEQUENCE [LARGE SCALE GENOMIC DNA]</scope>
    <source>
        <strain>97-27</strain>
    </source>
</reference>